<feature type="chain" id="PRO_0000190626" description="4-hydroxy-3-methylbut-2-en-1-yl diphosphate synthase (flavodoxin)">
    <location>
        <begin position="1"/>
        <end position="372"/>
    </location>
</feature>
<feature type="binding site" evidence="1">
    <location>
        <position position="270"/>
    </location>
    <ligand>
        <name>[4Fe-4S] cluster</name>
        <dbReference type="ChEBI" id="CHEBI:49883"/>
    </ligand>
</feature>
<feature type="binding site" evidence="1">
    <location>
        <position position="273"/>
    </location>
    <ligand>
        <name>[4Fe-4S] cluster</name>
        <dbReference type="ChEBI" id="CHEBI:49883"/>
    </ligand>
</feature>
<feature type="binding site" evidence="1">
    <location>
        <position position="305"/>
    </location>
    <ligand>
        <name>[4Fe-4S] cluster</name>
        <dbReference type="ChEBI" id="CHEBI:49883"/>
    </ligand>
</feature>
<feature type="binding site" evidence="1">
    <location>
        <position position="312"/>
    </location>
    <ligand>
        <name>[4Fe-4S] cluster</name>
        <dbReference type="ChEBI" id="CHEBI:49883"/>
    </ligand>
</feature>
<dbReference type="EC" id="1.17.7.3" evidence="1"/>
<dbReference type="EMBL" id="AE017220">
    <property type="protein sequence ID" value="AAX66426.1"/>
    <property type="molecule type" value="Genomic_DNA"/>
</dbReference>
<dbReference type="RefSeq" id="WP_000551804.1">
    <property type="nucleotide sequence ID" value="NC_006905.1"/>
</dbReference>
<dbReference type="SMR" id="Q57LI6"/>
<dbReference type="KEGG" id="sec:SCH_2520"/>
<dbReference type="HOGENOM" id="CLU_042258_0_0_6"/>
<dbReference type="UniPathway" id="UPA00056">
    <property type="reaction ID" value="UER00096"/>
</dbReference>
<dbReference type="Proteomes" id="UP000000538">
    <property type="component" value="Chromosome"/>
</dbReference>
<dbReference type="GO" id="GO:0051539">
    <property type="term" value="F:4 iron, 4 sulfur cluster binding"/>
    <property type="evidence" value="ECO:0007669"/>
    <property type="project" value="UniProtKB-UniRule"/>
</dbReference>
<dbReference type="GO" id="GO:0046429">
    <property type="term" value="F:4-hydroxy-3-methylbut-2-en-1-yl diphosphate synthase activity (ferredoxin)"/>
    <property type="evidence" value="ECO:0007669"/>
    <property type="project" value="UniProtKB-UniRule"/>
</dbReference>
<dbReference type="GO" id="GO:0141197">
    <property type="term" value="F:4-hydroxy-3-methylbut-2-enyl-diphosphate synthase activity (flavodoxin)"/>
    <property type="evidence" value="ECO:0007669"/>
    <property type="project" value="UniProtKB-EC"/>
</dbReference>
<dbReference type="GO" id="GO:0005506">
    <property type="term" value="F:iron ion binding"/>
    <property type="evidence" value="ECO:0007669"/>
    <property type="project" value="InterPro"/>
</dbReference>
<dbReference type="GO" id="GO:0019288">
    <property type="term" value="P:isopentenyl diphosphate biosynthetic process, methylerythritol 4-phosphate pathway"/>
    <property type="evidence" value="ECO:0007669"/>
    <property type="project" value="UniProtKB-UniRule"/>
</dbReference>
<dbReference type="GO" id="GO:0016114">
    <property type="term" value="P:terpenoid biosynthetic process"/>
    <property type="evidence" value="ECO:0007669"/>
    <property type="project" value="InterPro"/>
</dbReference>
<dbReference type="FunFam" id="3.20.20.20:FF:000001">
    <property type="entry name" value="4-hydroxy-3-methylbut-2-en-1-yl diphosphate synthase (flavodoxin)"/>
    <property type="match status" value="1"/>
</dbReference>
<dbReference type="FunFam" id="3.30.413.10:FF:000002">
    <property type="entry name" value="4-hydroxy-3-methylbut-2-en-1-yl diphosphate synthase (flavodoxin)"/>
    <property type="match status" value="1"/>
</dbReference>
<dbReference type="Gene3D" id="3.20.20.20">
    <property type="entry name" value="Dihydropteroate synthase-like"/>
    <property type="match status" value="1"/>
</dbReference>
<dbReference type="Gene3D" id="3.30.413.10">
    <property type="entry name" value="Sulfite Reductase Hemoprotein, domain 1"/>
    <property type="match status" value="1"/>
</dbReference>
<dbReference type="HAMAP" id="MF_00159">
    <property type="entry name" value="IspG"/>
    <property type="match status" value="1"/>
</dbReference>
<dbReference type="InterPro" id="IPR011005">
    <property type="entry name" value="Dihydropteroate_synth-like_sf"/>
</dbReference>
<dbReference type="InterPro" id="IPR016425">
    <property type="entry name" value="IspG_bac"/>
</dbReference>
<dbReference type="InterPro" id="IPR004588">
    <property type="entry name" value="IspG_bac-typ"/>
</dbReference>
<dbReference type="InterPro" id="IPR045854">
    <property type="entry name" value="NO2/SO3_Rdtase_4Fe4S_sf"/>
</dbReference>
<dbReference type="NCBIfam" id="TIGR00612">
    <property type="entry name" value="ispG_gcpE"/>
    <property type="match status" value="1"/>
</dbReference>
<dbReference type="NCBIfam" id="NF001540">
    <property type="entry name" value="PRK00366.1"/>
    <property type="match status" value="1"/>
</dbReference>
<dbReference type="PANTHER" id="PTHR30454">
    <property type="entry name" value="4-HYDROXY-3-METHYLBUT-2-EN-1-YL DIPHOSPHATE SYNTHASE"/>
    <property type="match status" value="1"/>
</dbReference>
<dbReference type="PANTHER" id="PTHR30454:SF0">
    <property type="entry name" value="4-HYDROXY-3-METHYLBUT-2-EN-1-YL DIPHOSPHATE SYNTHASE (FERREDOXIN), CHLOROPLASTIC"/>
    <property type="match status" value="1"/>
</dbReference>
<dbReference type="Pfam" id="PF04551">
    <property type="entry name" value="GcpE"/>
    <property type="match status" value="1"/>
</dbReference>
<dbReference type="PIRSF" id="PIRSF004640">
    <property type="entry name" value="IspG"/>
    <property type="match status" value="1"/>
</dbReference>
<dbReference type="SUPFAM" id="SSF51717">
    <property type="entry name" value="Dihydropteroate synthetase-like"/>
    <property type="match status" value="1"/>
</dbReference>
<dbReference type="SUPFAM" id="SSF56014">
    <property type="entry name" value="Nitrite and sulphite reductase 4Fe-4S domain-like"/>
    <property type="match status" value="1"/>
</dbReference>
<reference key="1">
    <citation type="journal article" date="2005" name="Nucleic Acids Res.">
        <title>The genome sequence of Salmonella enterica serovar Choleraesuis, a highly invasive and resistant zoonotic pathogen.</title>
        <authorList>
            <person name="Chiu C.-H."/>
            <person name="Tang P."/>
            <person name="Chu C."/>
            <person name="Hu S."/>
            <person name="Bao Q."/>
            <person name="Yu J."/>
            <person name="Chou Y.-Y."/>
            <person name="Wang H.-S."/>
            <person name="Lee Y.-S."/>
        </authorList>
    </citation>
    <scope>NUCLEOTIDE SEQUENCE [LARGE SCALE GENOMIC DNA]</scope>
    <source>
        <strain>SC-B67</strain>
    </source>
</reference>
<evidence type="ECO:0000255" key="1">
    <source>
        <dbReference type="HAMAP-Rule" id="MF_00159"/>
    </source>
</evidence>
<accession>Q57LI6</accession>
<gene>
    <name evidence="1" type="primary">ispG</name>
    <name type="synonym">gcpE</name>
    <name type="ordered locus">SCH_2520</name>
</gene>
<comment type="function">
    <text evidence="1">Converts 2C-methyl-D-erythritol 2,4-cyclodiphosphate (ME-2,4cPP) into 1-hydroxy-2-methyl-2-(E)-butenyl 4-diphosphate.</text>
</comment>
<comment type="catalytic activity">
    <reaction evidence="1">
        <text>(2E)-4-hydroxy-3-methylbut-2-enyl diphosphate + oxidized [flavodoxin] + H2O + 2 H(+) = 2-C-methyl-D-erythritol 2,4-cyclic diphosphate + reduced [flavodoxin]</text>
        <dbReference type="Rhea" id="RHEA:43604"/>
        <dbReference type="Rhea" id="RHEA-COMP:10622"/>
        <dbReference type="Rhea" id="RHEA-COMP:10623"/>
        <dbReference type="ChEBI" id="CHEBI:15377"/>
        <dbReference type="ChEBI" id="CHEBI:15378"/>
        <dbReference type="ChEBI" id="CHEBI:57618"/>
        <dbReference type="ChEBI" id="CHEBI:58210"/>
        <dbReference type="ChEBI" id="CHEBI:58483"/>
        <dbReference type="ChEBI" id="CHEBI:128753"/>
        <dbReference type="EC" id="1.17.7.3"/>
    </reaction>
</comment>
<comment type="cofactor">
    <cofactor evidence="1">
        <name>[4Fe-4S] cluster</name>
        <dbReference type="ChEBI" id="CHEBI:49883"/>
    </cofactor>
    <text evidence="1">Binds 1 [4Fe-4S] cluster.</text>
</comment>
<comment type="pathway">
    <text evidence="1">Isoprenoid biosynthesis; isopentenyl diphosphate biosynthesis via DXP pathway; isopentenyl diphosphate from 1-deoxy-D-xylulose 5-phosphate: step 5/6.</text>
</comment>
<comment type="similarity">
    <text evidence="1">Belongs to the IspG family.</text>
</comment>
<organism>
    <name type="scientific">Salmonella choleraesuis (strain SC-B67)</name>
    <dbReference type="NCBI Taxonomy" id="321314"/>
    <lineage>
        <taxon>Bacteria</taxon>
        <taxon>Pseudomonadati</taxon>
        <taxon>Pseudomonadota</taxon>
        <taxon>Gammaproteobacteria</taxon>
        <taxon>Enterobacterales</taxon>
        <taxon>Enterobacteriaceae</taxon>
        <taxon>Salmonella</taxon>
    </lineage>
</organism>
<proteinExistence type="inferred from homology"/>
<keyword id="KW-0004">4Fe-4S</keyword>
<keyword id="KW-0408">Iron</keyword>
<keyword id="KW-0411">Iron-sulfur</keyword>
<keyword id="KW-0414">Isoprene biosynthesis</keyword>
<keyword id="KW-0479">Metal-binding</keyword>
<keyword id="KW-0560">Oxidoreductase</keyword>
<sequence length="372" mass="40626">MHNQAPIQRRKSTRIYVGNVPIGDGAPIAVQSMTNTRTTDVEATVNQIKALERVGADIVRVSVPTMDAAEAFKLIKQQVNVPLVADIHFDYRIALKVAEYGVDCLRINPGNIGNEERIRMVVDCARDKNIPIRIGVNAGSLEKDLQEKYGEPTPQALLESAMRHVDHLDRLNFDQFKVSVKASDVFLAVESYRLLAKQIDQPLHLGITEAGGARSGAVKSAIGLGLLLSEGIGDTLRVSLAADPVEEIKVGFDILKSLRIRARGINFIACPTCSRQEFDVIGTVNALEQRLEDIITPMDVSIIGCVVNGPGEALVSTLGVTGGNKKSGLYEDGVRKDRLDNDDMIAQLESRIRAKASQLDEARRIDVLQVEK</sequence>
<protein>
    <recommendedName>
        <fullName evidence="1">4-hydroxy-3-methylbut-2-en-1-yl diphosphate synthase (flavodoxin)</fullName>
        <ecNumber evidence="1">1.17.7.3</ecNumber>
    </recommendedName>
    <alternativeName>
        <fullName evidence="1">1-hydroxy-2-methyl-2-(E)-butenyl 4-diphosphate synthase</fullName>
    </alternativeName>
</protein>
<name>ISPG_SALCH</name>